<organism>
    <name type="scientific">Arabidopsis thaliana</name>
    <name type="common">Mouse-ear cress</name>
    <dbReference type="NCBI Taxonomy" id="3702"/>
    <lineage>
        <taxon>Eukaryota</taxon>
        <taxon>Viridiplantae</taxon>
        <taxon>Streptophyta</taxon>
        <taxon>Embryophyta</taxon>
        <taxon>Tracheophyta</taxon>
        <taxon>Spermatophyta</taxon>
        <taxon>Magnoliopsida</taxon>
        <taxon>eudicotyledons</taxon>
        <taxon>Gunneridae</taxon>
        <taxon>Pentapetalae</taxon>
        <taxon>rosids</taxon>
        <taxon>malvids</taxon>
        <taxon>Brassicales</taxon>
        <taxon>Brassicaceae</taxon>
        <taxon>Camelineae</taxon>
        <taxon>Arabidopsis</taxon>
    </lineage>
</organism>
<dbReference type="EC" id="2.7.11.1"/>
<dbReference type="EMBL" id="AC003680">
    <property type="protein sequence ID" value="AAC06160.1"/>
    <property type="molecule type" value="Genomic_DNA"/>
</dbReference>
<dbReference type="EMBL" id="CP002685">
    <property type="protein sequence ID" value="AEC10574.1"/>
    <property type="molecule type" value="Genomic_DNA"/>
</dbReference>
<dbReference type="EMBL" id="BT002788">
    <property type="protein sequence ID" value="AAO22616.1"/>
    <property type="molecule type" value="mRNA"/>
</dbReference>
<dbReference type="EMBL" id="BT005124">
    <property type="protein sequence ID" value="AAO50657.1"/>
    <property type="molecule type" value="mRNA"/>
</dbReference>
<dbReference type="PIR" id="T00872">
    <property type="entry name" value="T00872"/>
</dbReference>
<dbReference type="RefSeq" id="NP_182083.1">
    <property type="nucleotide sequence ID" value="NM_130121.4"/>
</dbReference>
<dbReference type="SMR" id="O64639"/>
<dbReference type="FunCoup" id="O64639">
    <property type="interactions" value="1286"/>
</dbReference>
<dbReference type="GlyGen" id="O64639">
    <property type="glycosylation" value="3 sites"/>
</dbReference>
<dbReference type="iPTMnet" id="O64639"/>
<dbReference type="PaxDb" id="3702-AT2G45590.1"/>
<dbReference type="ProteomicsDB" id="242359"/>
<dbReference type="EnsemblPlants" id="AT2G45590.1">
    <property type="protein sequence ID" value="AT2G45590.1"/>
    <property type="gene ID" value="AT2G45590"/>
</dbReference>
<dbReference type="GeneID" id="819167"/>
<dbReference type="Gramene" id="AT2G45590.1">
    <property type="protein sequence ID" value="AT2G45590.1"/>
    <property type="gene ID" value="AT2G45590"/>
</dbReference>
<dbReference type="KEGG" id="ath:AT2G45590"/>
<dbReference type="Araport" id="AT2G45590"/>
<dbReference type="TAIR" id="AT2G45590"/>
<dbReference type="eggNOG" id="KOG1187">
    <property type="taxonomic scope" value="Eukaryota"/>
</dbReference>
<dbReference type="HOGENOM" id="CLU_011728_0_0_1"/>
<dbReference type="InParanoid" id="O64639"/>
<dbReference type="OMA" id="SGLWCDV"/>
<dbReference type="PhylomeDB" id="O64639"/>
<dbReference type="PRO" id="PR:O64639"/>
<dbReference type="Proteomes" id="UP000006548">
    <property type="component" value="Chromosome 2"/>
</dbReference>
<dbReference type="ExpressionAtlas" id="O64639">
    <property type="expression patterns" value="baseline and differential"/>
</dbReference>
<dbReference type="GO" id="GO:0005886">
    <property type="term" value="C:plasma membrane"/>
    <property type="evidence" value="ECO:0007669"/>
    <property type="project" value="UniProtKB-SubCell"/>
</dbReference>
<dbReference type="GO" id="GO:0005524">
    <property type="term" value="F:ATP binding"/>
    <property type="evidence" value="ECO:0007669"/>
    <property type="project" value="UniProtKB-KW"/>
</dbReference>
<dbReference type="GO" id="GO:0106310">
    <property type="term" value="F:protein serine kinase activity"/>
    <property type="evidence" value="ECO:0007669"/>
    <property type="project" value="RHEA"/>
</dbReference>
<dbReference type="GO" id="GO:0004674">
    <property type="term" value="F:protein serine/threonine kinase activity"/>
    <property type="evidence" value="ECO:0007669"/>
    <property type="project" value="UniProtKB-KW"/>
</dbReference>
<dbReference type="FunFam" id="1.10.510.10:FF:001023">
    <property type="entry name" value="Os07g0541700 protein"/>
    <property type="match status" value="1"/>
</dbReference>
<dbReference type="Gene3D" id="3.30.200.20">
    <property type="entry name" value="Phosphorylase Kinase, domain 1"/>
    <property type="match status" value="1"/>
</dbReference>
<dbReference type="Gene3D" id="1.10.510.10">
    <property type="entry name" value="Transferase(Phosphotransferase) domain 1"/>
    <property type="match status" value="2"/>
</dbReference>
<dbReference type="InterPro" id="IPR044576">
    <property type="entry name" value="At4g25390-like"/>
</dbReference>
<dbReference type="InterPro" id="IPR011009">
    <property type="entry name" value="Kinase-like_dom_sf"/>
</dbReference>
<dbReference type="InterPro" id="IPR000719">
    <property type="entry name" value="Prot_kinase_dom"/>
</dbReference>
<dbReference type="InterPro" id="IPR017441">
    <property type="entry name" value="Protein_kinase_ATP_BS"/>
</dbReference>
<dbReference type="InterPro" id="IPR008271">
    <property type="entry name" value="Ser/Thr_kinase_AS"/>
</dbReference>
<dbReference type="PANTHER" id="PTHR46821:SF2">
    <property type="entry name" value="OS03G0251700 PROTEIN"/>
    <property type="match status" value="1"/>
</dbReference>
<dbReference type="PANTHER" id="PTHR46821">
    <property type="entry name" value="OS07G0586332 PROTEIN"/>
    <property type="match status" value="1"/>
</dbReference>
<dbReference type="Pfam" id="PF00069">
    <property type="entry name" value="Pkinase"/>
    <property type="match status" value="2"/>
</dbReference>
<dbReference type="SMART" id="SM00220">
    <property type="entry name" value="S_TKc"/>
    <property type="match status" value="1"/>
</dbReference>
<dbReference type="SUPFAM" id="SSF56112">
    <property type="entry name" value="Protein kinase-like (PK-like)"/>
    <property type="match status" value="1"/>
</dbReference>
<dbReference type="PROSITE" id="PS00107">
    <property type="entry name" value="PROTEIN_KINASE_ATP"/>
    <property type="match status" value="1"/>
</dbReference>
<dbReference type="PROSITE" id="PS50011">
    <property type="entry name" value="PROTEIN_KINASE_DOM"/>
    <property type="match status" value="1"/>
</dbReference>
<dbReference type="PROSITE" id="PS00108">
    <property type="entry name" value="PROTEIN_KINASE_ST"/>
    <property type="match status" value="1"/>
</dbReference>
<feature type="chain" id="PRO_0000403334" description="Receptor-like serine/threonine-protein kinase At2g45590">
    <location>
        <begin position="1"/>
        <end position="683"/>
    </location>
</feature>
<feature type="topological domain" description="Extracellular" evidence="2">
    <location>
        <begin position="1"/>
        <end position="30"/>
    </location>
</feature>
<feature type="transmembrane region" description="Helical" evidence="2">
    <location>
        <begin position="31"/>
        <end position="51"/>
    </location>
</feature>
<feature type="topological domain" description="Cytoplasmic" evidence="2">
    <location>
        <begin position="52"/>
        <end position="683"/>
    </location>
</feature>
<feature type="domain" description="Protein kinase" evidence="3">
    <location>
        <begin position="92"/>
        <end position="664"/>
    </location>
</feature>
<feature type="region of interest" description="Disordered" evidence="5">
    <location>
        <begin position="1"/>
        <end position="21"/>
    </location>
</feature>
<feature type="region of interest" description="Disordered" evidence="5">
    <location>
        <begin position="406"/>
        <end position="436"/>
    </location>
</feature>
<feature type="compositionally biased region" description="Polar residues" evidence="5">
    <location>
        <begin position="411"/>
        <end position="424"/>
    </location>
</feature>
<feature type="compositionally biased region" description="Basic residues" evidence="5">
    <location>
        <begin position="425"/>
        <end position="436"/>
    </location>
</feature>
<feature type="active site" description="Proton acceptor" evidence="3 4">
    <location>
        <position position="223"/>
    </location>
</feature>
<feature type="binding site" evidence="3">
    <location>
        <begin position="98"/>
        <end position="106"/>
    </location>
    <ligand>
        <name>ATP</name>
        <dbReference type="ChEBI" id="CHEBI:30616"/>
    </ligand>
</feature>
<feature type="binding site" evidence="3">
    <location>
        <position position="121"/>
    </location>
    <ligand>
        <name>ATP</name>
        <dbReference type="ChEBI" id="CHEBI:30616"/>
    </ligand>
</feature>
<keyword id="KW-0067">ATP-binding</keyword>
<keyword id="KW-1003">Cell membrane</keyword>
<keyword id="KW-0418">Kinase</keyword>
<keyword id="KW-0472">Membrane</keyword>
<keyword id="KW-0547">Nucleotide-binding</keyword>
<keyword id="KW-0675">Receptor</keyword>
<keyword id="KW-1185">Reference proteome</keyword>
<keyword id="KW-0723">Serine/threonine-protein kinase</keyword>
<keyword id="KW-0808">Transferase</keyword>
<keyword id="KW-0812">Transmembrane</keyword>
<keyword id="KW-1133">Transmembrane helix</keyword>
<sequence length="683" mass="75554">MPSRLSPPDIPPLQPTPTVSDGHHRFQTLPLIIAGSLTLTGVLLILVTLLIYRRLYRNRTAPSDLISNSKSPQHYQCRRFSYSQLRRATNSFSESTHLGHGGFGSVYKADFPSGGDSLAVKVMDTSAGSLQGEREFHNELSLSSHLIGSPHVVSLLGFSSDRRGRKLILVYELMANRSLQDALLDRKCVELMDWNKRFEIATDIAKGIEFLHHCCDPIIIHGDIKPSNILLDSDFKAKIGDFGLARVKSEDFDTRILIEEEDKSKDVVEDNGSILEETESVITVFEEGNNVVNLSPETCGISVLTETVASPGEKSGLSPENCAVSILTVEVGAASPAMASIPSPETCAISVLTDTGLSPESSKLKVGSKRDWWWKQDNNGGSRGGIESGSVKDYVMEWIGSEIKKERPSNNKEWINNGDGSSSVSKKKKKEKKRKPREWWKEEFCEELTRKKRKKKKKKKRGLSSISSIDSWFHRDDGASSVHDHNLNPTKRKKRNSIDWWVDGLSGELKSVMGKKNSQDSGLWCDVNVQKSGGVSSTPSMRGTVCYIAPECGGGGVLSEKCDVYSFGVLLLVLVSGRRPLQVTASPMSEFERANLISWAKQLACNGKLLELVDKSIHSLEKEQAVLCITIALLCLQRSPVKRPTMKEIVEMLSGVSEPPHLPFEFSPSPPMGFPFKSRKKAR</sequence>
<comment type="catalytic activity">
    <reaction>
        <text>L-seryl-[protein] + ATP = O-phospho-L-seryl-[protein] + ADP + H(+)</text>
        <dbReference type="Rhea" id="RHEA:17989"/>
        <dbReference type="Rhea" id="RHEA-COMP:9863"/>
        <dbReference type="Rhea" id="RHEA-COMP:11604"/>
        <dbReference type="ChEBI" id="CHEBI:15378"/>
        <dbReference type="ChEBI" id="CHEBI:29999"/>
        <dbReference type="ChEBI" id="CHEBI:30616"/>
        <dbReference type="ChEBI" id="CHEBI:83421"/>
        <dbReference type="ChEBI" id="CHEBI:456216"/>
        <dbReference type="EC" id="2.7.11.1"/>
    </reaction>
</comment>
<comment type="catalytic activity">
    <reaction>
        <text>L-threonyl-[protein] + ATP = O-phospho-L-threonyl-[protein] + ADP + H(+)</text>
        <dbReference type="Rhea" id="RHEA:46608"/>
        <dbReference type="Rhea" id="RHEA-COMP:11060"/>
        <dbReference type="Rhea" id="RHEA-COMP:11605"/>
        <dbReference type="ChEBI" id="CHEBI:15378"/>
        <dbReference type="ChEBI" id="CHEBI:30013"/>
        <dbReference type="ChEBI" id="CHEBI:30616"/>
        <dbReference type="ChEBI" id="CHEBI:61977"/>
        <dbReference type="ChEBI" id="CHEBI:456216"/>
        <dbReference type="EC" id="2.7.11.1"/>
    </reaction>
</comment>
<comment type="subcellular location">
    <subcellularLocation>
        <location evidence="1">Cell membrane</location>
        <topology evidence="1">Single-pass membrane protein</topology>
    </subcellularLocation>
</comment>
<comment type="similarity">
    <text evidence="3">Belongs to the protein kinase superfamily. Ser/Thr protein kinase family.</text>
</comment>
<proteinExistence type="evidence at transcript level"/>
<name>Y2559_ARATH</name>
<gene>
    <name type="ordered locus">At2g45590</name>
    <name type="ORF">F17K2.12</name>
</gene>
<accession>O64639</accession>
<evidence type="ECO:0000250" key="1"/>
<evidence type="ECO:0000255" key="2"/>
<evidence type="ECO:0000255" key="3">
    <source>
        <dbReference type="PROSITE-ProRule" id="PRU00159"/>
    </source>
</evidence>
<evidence type="ECO:0000255" key="4">
    <source>
        <dbReference type="PROSITE-ProRule" id="PRU10027"/>
    </source>
</evidence>
<evidence type="ECO:0000256" key="5">
    <source>
        <dbReference type="SAM" id="MobiDB-lite"/>
    </source>
</evidence>
<reference key="1">
    <citation type="journal article" date="1999" name="Nature">
        <title>Sequence and analysis of chromosome 2 of the plant Arabidopsis thaliana.</title>
        <authorList>
            <person name="Lin X."/>
            <person name="Kaul S."/>
            <person name="Rounsley S.D."/>
            <person name="Shea T.P."/>
            <person name="Benito M.-I."/>
            <person name="Town C.D."/>
            <person name="Fujii C.Y."/>
            <person name="Mason T.M."/>
            <person name="Bowman C.L."/>
            <person name="Barnstead M.E."/>
            <person name="Feldblyum T.V."/>
            <person name="Buell C.R."/>
            <person name="Ketchum K.A."/>
            <person name="Lee J.J."/>
            <person name="Ronning C.M."/>
            <person name="Koo H.L."/>
            <person name="Moffat K.S."/>
            <person name="Cronin L.A."/>
            <person name="Shen M."/>
            <person name="Pai G."/>
            <person name="Van Aken S."/>
            <person name="Umayam L."/>
            <person name="Tallon L.J."/>
            <person name="Gill J.E."/>
            <person name="Adams M.D."/>
            <person name="Carrera A.J."/>
            <person name="Creasy T.H."/>
            <person name="Goodman H.M."/>
            <person name="Somerville C.R."/>
            <person name="Copenhaver G.P."/>
            <person name="Preuss D."/>
            <person name="Nierman W.C."/>
            <person name="White O."/>
            <person name="Eisen J.A."/>
            <person name="Salzberg S.L."/>
            <person name="Fraser C.M."/>
            <person name="Venter J.C."/>
        </authorList>
    </citation>
    <scope>NUCLEOTIDE SEQUENCE [LARGE SCALE GENOMIC DNA]</scope>
    <source>
        <strain>cv. Columbia</strain>
    </source>
</reference>
<reference key="2">
    <citation type="journal article" date="2017" name="Plant J.">
        <title>Araport11: a complete reannotation of the Arabidopsis thaliana reference genome.</title>
        <authorList>
            <person name="Cheng C.Y."/>
            <person name="Krishnakumar V."/>
            <person name="Chan A.P."/>
            <person name="Thibaud-Nissen F."/>
            <person name="Schobel S."/>
            <person name="Town C.D."/>
        </authorList>
    </citation>
    <scope>GENOME REANNOTATION</scope>
    <source>
        <strain>cv. Columbia</strain>
    </source>
</reference>
<reference key="3">
    <citation type="journal article" date="2003" name="Science">
        <title>Empirical analysis of transcriptional activity in the Arabidopsis genome.</title>
        <authorList>
            <person name="Yamada K."/>
            <person name="Lim J."/>
            <person name="Dale J.M."/>
            <person name="Chen H."/>
            <person name="Shinn P."/>
            <person name="Palm C.J."/>
            <person name="Southwick A.M."/>
            <person name="Wu H.C."/>
            <person name="Kim C.J."/>
            <person name="Nguyen M."/>
            <person name="Pham P.K."/>
            <person name="Cheuk R.F."/>
            <person name="Karlin-Newmann G."/>
            <person name="Liu S.X."/>
            <person name="Lam B."/>
            <person name="Sakano H."/>
            <person name="Wu T."/>
            <person name="Yu G."/>
            <person name="Miranda M."/>
            <person name="Quach H.L."/>
            <person name="Tripp M."/>
            <person name="Chang C.H."/>
            <person name="Lee J.M."/>
            <person name="Toriumi M.J."/>
            <person name="Chan M.M."/>
            <person name="Tang C.C."/>
            <person name="Onodera C.S."/>
            <person name="Deng J.M."/>
            <person name="Akiyama K."/>
            <person name="Ansari Y."/>
            <person name="Arakawa T."/>
            <person name="Banh J."/>
            <person name="Banno F."/>
            <person name="Bowser L."/>
            <person name="Brooks S.Y."/>
            <person name="Carninci P."/>
            <person name="Chao Q."/>
            <person name="Choy N."/>
            <person name="Enju A."/>
            <person name="Goldsmith A.D."/>
            <person name="Gurjal M."/>
            <person name="Hansen N.F."/>
            <person name="Hayashizaki Y."/>
            <person name="Johnson-Hopson C."/>
            <person name="Hsuan V.W."/>
            <person name="Iida K."/>
            <person name="Karnes M."/>
            <person name="Khan S."/>
            <person name="Koesema E."/>
            <person name="Ishida J."/>
            <person name="Jiang P.X."/>
            <person name="Jones T."/>
            <person name="Kawai J."/>
            <person name="Kamiya A."/>
            <person name="Meyers C."/>
            <person name="Nakajima M."/>
            <person name="Narusaka M."/>
            <person name="Seki M."/>
            <person name="Sakurai T."/>
            <person name="Satou M."/>
            <person name="Tamse R."/>
            <person name="Vaysberg M."/>
            <person name="Wallender E.K."/>
            <person name="Wong C."/>
            <person name="Yamamura Y."/>
            <person name="Yuan S."/>
            <person name="Shinozaki K."/>
            <person name="Davis R.W."/>
            <person name="Theologis A."/>
            <person name="Ecker J.R."/>
        </authorList>
    </citation>
    <scope>NUCLEOTIDE SEQUENCE [LARGE SCALE MRNA]</scope>
    <source>
        <strain>cv. Columbia</strain>
    </source>
</reference>
<protein>
    <recommendedName>
        <fullName>Receptor-like serine/threonine-protein kinase At2g45590</fullName>
        <ecNumber>2.7.11.1</ecNumber>
    </recommendedName>
</protein>